<sequence>MASQGTKRSYEQMETDGDRQNATEIRASVGKMIDGIGRFYIQMCTELKLSDYEGRLIQNSLTIERMVLSAFDERRNKYLEEHPSAGKDPKKTGGPIYKRVDGKWMRELVLYDKEEIRRIWRQANNGDDATAGLTHMMIWHSNLNDTTYQRTRALVRTGMDPRMCSLMQGSTLPRRSGAAGAAVKGVGTMVMELIRMIKRGINDRNFWRGENGRKTRIAYERMCNILKGKFQTAAQRAMMDQVRESRNPGNAEIEDLIFLARSALILRGSVAHKSCLPACVYGPAVASGYDFEKEGYSLVGIDPFKLLQNSQVYSLIRPNENPAHKSQLVWMACNSAAFEDLRVSSFIRGTKVIPRGKLSTRGVQIASNENMDTMGSSTLELRSRYWAIRTRSGGNTNQQRASAGQISIQPTFSVQRNLPFDKTTIMAAFTGNAEGRTSDMRAEIIRMMESARPEEVSFQGRGVFELSDERAANPIVPSFDMSNEGSYFFGDNAEEYDN</sequence>
<reference key="1">
    <citation type="journal article" date="1989" name="J. Gen. Virol.">
        <title>Biological and genetic evolution of the nucleoprotein gene of human influenza A viruses.</title>
        <authorList>
            <person name="Altmueller A."/>
            <person name="Fitch W.M."/>
            <person name="Scholtissek C."/>
        </authorList>
    </citation>
    <scope>NUCLEOTIDE SEQUENCE [GENOMIC RNA]</scope>
</reference>
<evidence type="ECO:0000255" key="1">
    <source>
        <dbReference type="HAMAP-Rule" id="MF_04070"/>
    </source>
</evidence>
<evidence type="ECO:0000256" key="2">
    <source>
        <dbReference type="SAM" id="MobiDB-lite"/>
    </source>
</evidence>
<organism>
    <name type="scientific">Influenza A virus (strain A/Fort Warren/1/1950 H1N1)</name>
    <dbReference type="NCBI Taxonomy" id="384525"/>
    <lineage>
        <taxon>Viruses</taxon>
        <taxon>Riboviria</taxon>
        <taxon>Orthornavirae</taxon>
        <taxon>Negarnaviricota</taxon>
        <taxon>Polyploviricotina</taxon>
        <taxon>Insthoviricetes</taxon>
        <taxon>Articulavirales</taxon>
        <taxon>Orthomyxoviridae</taxon>
        <taxon>Alphainfluenzavirus</taxon>
        <taxon>Alphainfluenzavirus influenzae</taxon>
        <taxon>Influenza A virus</taxon>
    </lineage>
</organism>
<organismHost>
    <name type="scientific">Aves</name>
    <dbReference type="NCBI Taxonomy" id="8782"/>
</organismHost>
<organismHost>
    <name type="scientific">Homo sapiens</name>
    <name type="common">Human</name>
    <dbReference type="NCBI Taxonomy" id="9606"/>
</organismHost>
<organismHost>
    <name type="scientific">Sus scrofa</name>
    <name type="common">Pig</name>
    <dbReference type="NCBI Taxonomy" id="9823"/>
</organismHost>
<keyword id="KW-0167">Capsid protein</keyword>
<keyword id="KW-1139">Helical capsid protein</keyword>
<keyword id="KW-1048">Host nucleus</keyword>
<keyword id="KW-0945">Host-virus interaction</keyword>
<keyword id="KW-0687">Ribonucleoprotein</keyword>
<keyword id="KW-0694">RNA-binding</keyword>
<keyword id="KW-0543">Viral nucleoprotein</keyword>
<keyword id="KW-1163">Viral penetration into host nucleus</keyword>
<keyword id="KW-0946">Virion</keyword>
<keyword id="KW-1160">Virus entry into host cell</keyword>
<comment type="function">
    <text evidence="1">Encapsidates the negative strand viral RNA, protecting it from nucleases. The encapsidated genomic RNA is termed the ribonucleoprotein (RNP) and serves as template for transcription and replication. The RNP needs to be localized in the host nucleus to start an infectious cycle, but is too large to diffuse through the nuclear pore complex. NP comprises at least 2 nuclear localization signals that are responsible for the active RNP import into the nucleus through cellular importin alpha/beta pathway. Later in the infection, nclear export of RNPs are mediated through viral proteins NEP interacting with M1 which binds nucleoproteins. It is possible that nucleoprotein binds directly host exportin-1/XPO1 and plays an active role in RNPs nuclear export. M1 interaction with RNP seems to hide nucleoprotein's nuclear localization signals. Soon after a virion infects a new cell, M1 dissociates from the RNP under acidification of the virion driven by M2 protein. Dissociation of M1 from RNP unmasks nucleoprotein's nuclear localization signals, targeting the RNP to the nucleus.</text>
</comment>
<comment type="subunit">
    <text evidence="1">Homomultimerizes to form the nucleocapsid. May bind host exportin-1/XPO1. Binds to viral genomic RNA. Protein-RNA contacts are mediated by a combination of electrostatic interactions between positively charged residues and the phosphate backbone and planar interactions between aromatic side chains and bases.</text>
</comment>
<comment type="subcellular location">
    <subcellularLocation>
        <location evidence="1">Virion</location>
    </subcellularLocation>
    <subcellularLocation>
        <location evidence="1">Host nucleus</location>
    </subcellularLocation>
</comment>
<comment type="PTM">
    <text evidence="1">Late in virus-infected cells, may be cleaved from a 56-kDa protein to a 53-kDa protein by a cellular caspase. This cleavage might be a marker for the onset of apoptosis in infected cells or have a specific function in virus host interaction.</text>
</comment>
<comment type="similarity">
    <text evidence="1">Belongs to the influenza viruses nucleoprotein family.</text>
</comment>
<proteinExistence type="inferred from homology"/>
<protein>
    <recommendedName>
        <fullName evidence="1">Nucleoprotein</fullName>
    </recommendedName>
    <alternativeName>
        <fullName evidence="1">Nucleocapsid protein</fullName>
        <shortName evidence="1">Protein N</shortName>
    </alternativeName>
</protein>
<dbReference type="EMBL" id="D00601">
    <property type="protein sequence ID" value="BAA00477.1"/>
    <property type="molecule type" value="Genomic_RNA"/>
</dbReference>
<dbReference type="SMR" id="P18071"/>
<dbReference type="GO" id="GO:0019029">
    <property type="term" value="C:helical viral capsid"/>
    <property type="evidence" value="ECO:0007669"/>
    <property type="project" value="UniProtKB-UniRule"/>
</dbReference>
<dbReference type="GO" id="GO:0043657">
    <property type="term" value="C:host cell"/>
    <property type="evidence" value="ECO:0007669"/>
    <property type="project" value="GOC"/>
</dbReference>
<dbReference type="GO" id="GO:0042025">
    <property type="term" value="C:host cell nucleus"/>
    <property type="evidence" value="ECO:0007669"/>
    <property type="project" value="UniProtKB-SubCell"/>
</dbReference>
<dbReference type="GO" id="GO:1990904">
    <property type="term" value="C:ribonucleoprotein complex"/>
    <property type="evidence" value="ECO:0007669"/>
    <property type="project" value="UniProtKB-KW"/>
</dbReference>
<dbReference type="GO" id="GO:0019013">
    <property type="term" value="C:viral nucleocapsid"/>
    <property type="evidence" value="ECO:0007669"/>
    <property type="project" value="UniProtKB-UniRule"/>
</dbReference>
<dbReference type="GO" id="GO:0003723">
    <property type="term" value="F:RNA binding"/>
    <property type="evidence" value="ECO:0007669"/>
    <property type="project" value="UniProtKB-UniRule"/>
</dbReference>
<dbReference type="GO" id="GO:0005198">
    <property type="term" value="F:structural molecule activity"/>
    <property type="evidence" value="ECO:0007669"/>
    <property type="project" value="UniProtKB-UniRule"/>
</dbReference>
<dbReference type="GO" id="GO:0046718">
    <property type="term" value="P:symbiont entry into host cell"/>
    <property type="evidence" value="ECO:0007669"/>
    <property type="project" value="UniProtKB-KW"/>
</dbReference>
<dbReference type="GO" id="GO:0075732">
    <property type="term" value="P:viral penetration into host nucleus"/>
    <property type="evidence" value="ECO:0007669"/>
    <property type="project" value="UniProtKB-UniRule"/>
</dbReference>
<dbReference type="HAMAP" id="MF_04070">
    <property type="entry name" value="INFV_NCAP"/>
    <property type="match status" value="1"/>
</dbReference>
<dbReference type="InterPro" id="IPR002141">
    <property type="entry name" value="Flu_NP"/>
</dbReference>
<dbReference type="Pfam" id="PF00506">
    <property type="entry name" value="Flu_NP"/>
    <property type="match status" value="1"/>
</dbReference>
<dbReference type="SUPFAM" id="SSF161003">
    <property type="entry name" value="flu NP-like"/>
    <property type="match status" value="1"/>
</dbReference>
<feature type="chain" id="PRO_0000079045" description="Nucleoprotein">
    <location>
        <begin position="1"/>
        <end position="498"/>
    </location>
</feature>
<feature type="region of interest" description="Disordered" evidence="2">
    <location>
        <begin position="1"/>
        <end position="22"/>
    </location>
</feature>
<feature type="short sequence motif" description="Unconventional nuclear localization signal" evidence="1">
    <location>
        <begin position="1"/>
        <end position="18"/>
    </location>
</feature>
<feature type="short sequence motif" description="Bipartite nuclear localization signal" evidence="1">
    <location>
        <begin position="198"/>
        <end position="216"/>
    </location>
</feature>
<feature type="compositionally biased region" description="Basic and acidic residues" evidence="2">
    <location>
        <begin position="8"/>
        <end position="21"/>
    </location>
</feature>
<gene>
    <name evidence="1" type="primary">NP</name>
</gene>
<name>NCAP_I50A0</name>
<accession>P18071</accession>